<reference key="1">
    <citation type="journal article" date="2001" name="Nature">
        <title>Complete genome sequence of a multiple drug resistant Salmonella enterica serovar Typhi CT18.</title>
        <authorList>
            <person name="Parkhill J."/>
            <person name="Dougan G."/>
            <person name="James K.D."/>
            <person name="Thomson N.R."/>
            <person name="Pickard D."/>
            <person name="Wain J."/>
            <person name="Churcher C.M."/>
            <person name="Mungall K.L."/>
            <person name="Bentley S.D."/>
            <person name="Holden M.T.G."/>
            <person name="Sebaihia M."/>
            <person name="Baker S."/>
            <person name="Basham D."/>
            <person name="Brooks K."/>
            <person name="Chillingworth T."/>
            <person name="Connerton P."/>
            <person name="Cronin A."/>
            <person name="Davis P."/>
            <person name="Davies R.M."/>
            <person name="Dowd L."/>
            <person name="White N."/>
            <person name="Farrar J."/>
            <person name="Feltwell T."/>
            <person name="Hamlin N."/>
            <person name="Haque A."/>
            <person name="Hien T.T."/>
            <person name="Holroyd S."/>
            <person name="Jagels K."/>
            <person name="Krogh A."/>
            <person name="Larsen T.S."/>
            <person name="Leather S."/>
            <person name="Moule S."/>
            <person name="O'Gaora P."/>
            <person name="Parry C."/>
            <person name="Quail M.A."/>
            <person name="Rutherford K.M."/>
            <person name="Simmonds M."/>
            <person name="Skelton J."/>
            <person name="Stevens K."/>
            <person name="Whitehead S."/>
            <person name="Barrell B.G."/>
        </authorList>
    </citation>
    <scope>NUCLEOTIDE SEQUENCE [LARGE SCALE GENOMIC DNA]</scope>
    <source>
        <strain>CT18</strain>
    </source>
</reference>
<reference key="2">
    <citation type="journal article" date="2003" name="J. Bacteriol.">
        <title>Comparative genomics of Salmonella enterica serovar Typhi strains Ty2 and CT18.</title>
        <authorList>
            <person name="Deng W."/>
            <person name="Liou S.-R."/>
            <person name="Plunkett G. III"/>
            <person name="Mayhew G.F."/>
            <person name="Rose D.J."/>
            <person name="Burland V."/>
            <person name="Kodoyianni V."/>
            <person name="Schwartz D.C."/>
            <person name="Blattner F.R."/>
        </authorList>
    </citation>
    <scope>NUCLEOTIDE SEQUENCE [LARGE SCALE GENOMIC DNA]</scope>
    <source>
        <strain>ATCC 700931 / Ty2</strain>
    </source>
</reference>
<reference key="3">
    <citation type="journal article" date="2003" name="Nucleic Acids Res.">
        <title>A nomenclature for restriction enzymes, DNA methyltransferases, homing endonucleases and their genes.</title>
        <authorList>
            <person name="Roberts R.J."/>
            <person name="Belfort M."/>
            <person name="Bestor T."/>
            <person name="Bhagwat A.S."/>
            <person name="Bickle T.A."/>
            <person name="Bitinaite J."/>
            <person name="Blumenthal R.M."/>
            <person name="Degtyarev S.K."/>
            <person name="Dryden D.T."/>
            <person name="Dybvig K."/>
            <person name="Firman K."/>
            <person name="Gromova E.S."/>
            <person name="Gumport R.I."/>
            <person name="Halford S.E."/>
            <person name="Hattman S."/>
            <person name="Heitman J."/>
            <person name="Hornby D.P."/>
            <person name="Janulaitis A."/>
            <person name="Jeltsch A."/>
            <person name="Josephsen J."/>
            <person name="Kiss A."/>
            <person name="Klaenhammer T.R."/>
            <person name="Kobayashi I."/>
            <person name="Kong H."/>
            <person name="Krueger D.H."/>
            <person name="Lacks S."/>
            <person name="Marinus M.G."/>
            <person name="Miyahara M."/>
            <person name="Morgan R.D."/>
            <person name="Murray N.E."/>
            <person name="Nagaraja V."/>
            <person name="Piekarowicz A."/>
            <person name="Pingoud A."/>
            <person name="Raleigh E."/>
            <person name="Rao D.N."/>
            <person name="Reich N."/>
            <person name="Repin V.E."/>
            <person name="Selker E.U."/>
            <person name="Shaw P.C."/>
            <person name="Stein D.C."/>
            <person name="Stoddard B.L."/>
            <person name="Szybalski W."/>
            <person name="Trautner T.A."/>
            <person name="Van Etten J.L."/>
            <person name="Vitor J.M."/>
            <person name="Wilson G.G."/>
            <person name="Xu S.Y."/>
        </authorList>
    </citation>
    <scope>NOMENCLATURE</scope>
    <scope>SUBTYPE</scope>
</reference>
<proteinExistence type="inferred from homology"/>
<gene>
    <name type="primary">dam</name>
    <name type="ordered locus">STY4312</name>
    <name type="ordered locus">t4022</name>
</gene>
<name>DMA_SALTI</name>
<evidence type="ECO:0000250" key="1"/>
<evidence type="ECO:0000250" key="2">
    <source>
        <dbReference type="UniProtKB" id="P0AEE8"/>
    </source>
</evidence>
<evidence type="ECO:0000303" key="3">
    <source>
    </source>
</evidence>
<evidence type="ECO:0000305" key="4"/>
<protein>
    <recommendedName>
        <fullName>DNA adenine methylase</fullName>
        <ecNumber>2.1.1.72</ecNumber>
    </recommendedName>
    <alternativeName>
        <fullName>DNA adenine methyltransferase</fullName>
    </alternativeName>
    <alternativeName>
        <fullName>Deoxyadenosyl-methyltransferase</fullName>
    </alternativeName>
    <alternativeName>
        <fullName evidence="3">Orphan methyltransferase M.StyCDamP/M.StyTDamP</fullName>
        <shortName evidence="3">M.StyCDamP/M.StyTDamP</shortName>
    </alternativeName>
</protein>
<feature type="chain" id="PRO_0000087993" description="DNA adenine methylase">
    <location>
        <begin position="1"/>
        <end position="278"/>
    </location>
</feature>
<feature type="binding site" evidence="1">
    <location>
        <position position="10"/>
    </location>
    <ligand>
        <name>S-adenosyl-L-methionine</name>
        <dbReference type="ChEBI" id="CHEBI:59789"/>
    </ligand>
</feature>
<feature type="binding site" evidence="1">
    <location>
        <position position="14"/>
    </location>
    <ligand>
        <name>S-adenosyl-L-methionine</name>
        <dbReference type="ChEBI" id="CHEBI:59789"/>
    </ligand>
</feature>
<feature type="binding site" evidence="1">
    <location>
        <position position="54"/>
    </location>
    <ligand>
        <name>S-adenosyl-L-methionine</name>
        <dbReference type="ChEBI" id="CHEBI:59789"/>
    </ligand>
</feature>
<feature type="binding site" evidence="1">
    <location>
        <position position="181"/>
    </location>
    <ligand>
        <name>S-adenosyl-L-methionine</name>
        <dbReference type="ChEBI" id="CHEBI:59789"/>
    </ligand>
</feature>
<accession>P0A292</accession>
<accession>P55893</accession>
<organism>
    <name type="scientific">Salmonella typhi</name>
    <dbReference type="NCBI Taxonomy" id="90370"/>
    <lineage>
        <taxon>Bacteria</taxon>
        <taxon>Pseudomonadati</taxon>
        <taxon>Pseudomonadota</taxon>
        <taxon>Gammaproteobacteria</taxon>
        <taxon>Enterobacterales</taxon>
        <taxon>Enterobacteriaceae</taxon>
        <taxon>Salmonella</taxon>
    </lineage>
</organism>
<dbReference type="EC" id="2.1.1.72"/>
<dbReference type="EMBL" id="AL513382">
    <property type="protein sequence ID" value="CAD08130.1"/>
    <property type="molecule type" value="Genomic_DNA"/>
</dbReference>
<dbReference type="EMBL" id="AE014613">
    <property type="protein sequence ID" value="AAO71492.1"/>
    <property type="molecule type" value="Genomic_DNA"/>
</dbReference>
<dbReference type="RefSeq" id="NP_458420.1">
    <property type="nucleotide sequence ID" value="NC_003198.1"/>
</dbReference>
<dbReference type="RefSeq" id="WP_000742132.1">
    <property type="nucleotide sequence ID" value="NZ_WSUR01000001.1"/>
</dbReference>
<dbReference type="SMR" id="P0A292"/>
<dbReference type="STRING" id="220341.gene:17588143"/>
<dbReference type="REBASE" id="5691">
    <property type="entry name" value="M.StyCDamP"/>
</dbReference>
<dbReference type="REBASE" id="7050">
    <property type="entry name" value="M.StyTDamP"/>
</dbReference>
<dbReference type="KEGG" id="stt:t4022"/>
<dbReference type="KEGG" id="sty:STY4312"/>
<dbReference type="PATRIC" id="fig|220341.7.peg.4407"/>
<dbReference type="eggNOG" id="COG0338">
    <property type="taxonomic scope" value="Bacteria"/>
</dbReference>
<dbReference type="HOGENOM" id="CLU_063430_0_1_6"/>
<dbReference type="OMA" id="YMNRHGF"/>
<dbReference type="OrthoDB" id="9805629at2"/>
<dbReference type="Proteomes" id="UP000000541">
    <property type="component" value="Chromosome"/>
</dbReference>
<dbReference type="Proteomes" id="UP000002670">
    <property type="component" value="Chromosome"/>
</dbReference>
<dbReference type="GO" id="GO:1904047">
    <property type="term" value="F:S-adenosyl-L-methionine binding"/>
    <property type="evidence" value="ECO:0007669"/>
    <property type="project" value="TreeGrafter"/>
</dbReference>
<dbReference type="GO" id="GO:0043565">
    <property type="term" value="F:sequence-specific DNA binding"/>
    <property type="evidence" value="ECO:0007669"/>
    <property type="project" value="TreeGrafter"/>
</dbReference>
<dbReference type="GO" id="GO:0009007">
    <property type="term" value="F:site-specific DNA-methyltransferase (adenine-specific) activity"/>
    <property type="evidence" value="ECO:0007669"/>
    <property type="project" value="UniProtKB-EC"/>
</dbReference>
<dbReference type="GO" id="GO:0006260">
    <property type="term" value="P:DNA replication"/>
    <property type="evidence" value="ECO:0007669"/>
    <property type="project" value="UniProtKB-KW"/>
</dbReference>
<dbReference type="GO" id="GO:0009307">
    <property type="term" value="P:DNA restriction-modification system"/>
    <property type="evidence" value="ECO:0007669"/>
    <property type="project" value="InterPro"/>
</dbReference>
<dbReference type="GO" id="GO:0032259">
    <property type="term" value="P:methylation"/>
    <property type="evidence" value="ECO:0007669"/>
    <property type="project" value="UniProtKB-KW"/>
</dbReference>
<dbReference type="GO" id="GO:0006298">
    <property type="term" value="P:mismatch repair"/>
    <property type="evidence" value="ECO:0007669"/>
    <property type="project" value="TreeGrafter"/>
</dbReference>
<dbReference type="FunFam" id="1.10.1020.10:FF:000001">
    <property type="entry name" value="Site-specific DNA-methyltransferase (adenine-specific)"/>
    <property type="match status" value="1"/>
</dbReference>
<dbReference type="Gene3D" id="1.10.1020.10">
    <property type="entry name" value="Adenine-specific Methyltransferase, Domain 2"/>
    <property type="match status" value="1"/>
</dbReference>
<dbReference type="Gene3D" id="3.40.50.150">
    <property type="entry name" value="Vaccinia Virus protein VP39"/>
    <property type="match status" value="1"/>
</dbReference>
<dbReference type="InterPro" id="IPR023095">
    <property type="entry name" value="Ade_MeTrfase_dom_2"/>
</dbReference>
<dbReference type="InterPro" id="IPR002052">
    <property type="entry name" value="DNA_methylase_N6_adenine_CS"/>
</dbReference>
<dbReference type="InterPro" id="IPR012263">
    <property type="entry name" value="M_m6A_EcoRV"/>
</dbReference>
<dbReference type="InterPro" id="IPR012327">
    <property type="entry name" value="MeTrfase_D12"/>
</dbReference>
<dbReference type="InterPro" id="IPR029063">
    <property type="entry name" value="SAM-dependent_MTases_sf"/>
</dbReference>
<dbReference type="NCBIfam" id="TIGR00571">
    <property type="entry name" value="dam"/>
    <property type="match status" value="1"/>
</dbReference>
<dbReference type="NCBIfam" id="NF008152">
    <property type="entry name" value="PRK10904.1"/>
    <property type="match status" value="1"/>
</dbReference>
<dbReference type="PANTHER" id="PTHR30481">
    <property type="entry name" value="DNA ADENINE METHYLASE"/>
    <property type="match status" value="1"/>
</dbReference>
<dbReference type="PANTHER" id="PTHR30481:SF3">
    <property type="entry name" value="DNA ADENINE METHYLASE"/>
    <property type="match status" value="1"/>
</dbReference>
<dbReference type="Pfam" id="PF02086">
    <property type="entry name" value="MethyltransfD12"/>
    <property type="match status" value="1"/>
</dbReference>
<dbReference type="PIRSF" id="PIRSF000398">
    <property type="entry name" value="M_m6A_EcoRV"/>
    <property type="match status" value="1"/>
</dbReference>
<dbReference type="PRINTS" id="PR00505">
    <property type="entry name" value="D12N6MTFRASE"/>
</dbReference>
<dbReference type="SUPFAM" id="SSF53335">
    <property type="entry name" value="S-adenosyl-L-methionine-dependent methyltransferases"/>
    <property type="match status" value="1"/>
</dbReference>
<dbReference type="PROSITE" id="PS00092">
    <property type="entry name" value="N6_MTASE"/>
    <property type="match status" value="1"/>
</dbReference>
<sequence length="278" mass="32027">MKKNRAFLKWAGGKYPLLDDIKRHLPKGECLVEPFVGAGSVFLNTDFSRYILADINSDLISLYNIVKLRTDEYVQASRELFMPETNQAEVYYQLREEFNTCQDPFRRAVLFLYLNRYGYNGLCRYNLRGEFNVPFGRYKRPYFPEAELYHFAEKAQNAFFYCESYADSMARADKSSVVYCDPPYAPLSATANFTAYHTNSFSLTQQAHLAEIAENLVSNRIPVLISNHDTALTREWYQLAKLHVVKVRRSISSNGGTRKKVDELLALYQPGVATPARK</sequence>
<comment type="function">
    <text evidence="2 3">An alpha subtype methylase, recognizes the double-stranded sequence 5'-GATC-3' and methylates A-2 (By similarity) (PubMed:12654995). May be involved in methyl-directed DNA mismatch repair, initiation of chromosome replication and gene expression (By similarity).</text>
</comment>
<comment type="catalytic activity">
    <reaction>
        <text>a 2'-deoxyadenosine in DNA + S-adenosyl-L-methionine = an N(6)-methyl-2'-deoxyadenosine in DNA + S-adenosyl-L-homocysteine + H(+)</text>
        <dbReference type="Rhea" id="RHEA:15197"/>
        <dbReference type="Rhea" id="RHEA-COMP:12418"/>
        <dbReference type="Rhea" id="RHEA-COMP:12419"/>
        <dbReference type="ChEBI" id="CHEBI:15378"/>
        <dbReference type="ChEBI" id="CHEBI:57856"/>
        <dbReference type="ChEBI" id="CHEBI:59789"/>
        <dbReference type="ChEBI" id="CHEBI:90615"/>
        <dbReference type="ChEBI" id="CHEBI:90616"/>
        <dbReference type="EC" id="2.1.1.72"/>
    </reaction>
</comment>
<comment type="similarity">
    <text evidence="4">Belongs to the N(4)/N(6)-methyltransferase family.</text>
</comment>
<keyword id="KW-0235">DNA replication</keyword>
<keyword id="KW-0238">DNA-binding</keyword>
<keyword id="KW-0489">Methyltransferase</keyword>
<keyword id="KW-0949">S-adenosyl-L-methionine</keyword>
<keyword id="KW-0808">Transferase</keyword>